<accession>Q03306</accession>
<accession>D6VT91</accession>
<feature type="chain" id="PRO_0000086554" description="Serine/threonine-protein kinase PKH3">
    <location>
        <begin position="1"/>
        <end position="898"/>
    </location>
</feature>
<feature type="domain" description="Protein kinase" evidence="1">
    <location>
        <begin position="11"/>
        <end position="293"/>
    </location>
</feature>
<feature type="region of interest" description="Disordered" evidence="3">
    <location>
        <begin position="435"/>
        <end position="484"/>
    </location>
</feature>
<feature type="region of interest" description="Disordered" evidence="3">
    <location>
        <begin position="675"/>
        <end position="850"/>
    </location>
</feature>
<feature type="compositionally biased region" description="Polar residues" evidence="3">
    <location>
        <begin position="459"/>
        <end position="468"/>
    </location>
</feature>
<feature type="compositionally biased region" description="Low complexity" evidence="3">
    <location>
        <begin position="469"/>
        <end position="483"/>
    </location>
</feature>
<feature type="compositionally biased region" description="Polar residues" evidence="3">
    <location>
        <begin position="697"/>
        <end position="721"/>
    </location>
</feature>
<feature type="compositionally biased region" description="Basic and acidic residues" evidence="3">
    <location>
        <begin position="723"/>
        <end position="738"/>
    </location>
</feature>
<feature type="compositionally biased region" description="Polar residues" evidence="3">
    <location>
        <begin position="740"/>
        <end position="758"/>
    </location>
</feature>
<feature type="compositionally biased region" description="Polar residues" evidence="3">
    <location>
        <begin position="771"/>
        <end position="782"/>
    </location>
</feature>
<feature type="compositionally biased region" description="Polar residues" evidence="3">
    <location>
        <begin position="789"/>
        <end position="803"/>
    </location>
</feature>
<feature type="compositionally biased region" description="Low complexity" evidence="3">
    <location>
        <begin position="804"/>
        <end position="817"/>
    </location>
</feature>
<feature type="compositionally biased region" description="Polar residues" evidence="3">
    <location>
        <begin position="818"/>
        <end position="831"/>
    </location>
</feature>
<feature type="active site" description="Proton acceptor" evidence="1 2">
    <location>
        <position position="138"/>
    </location>
</feature>
<feature type="binding site" evidence="1">
    <location>
        <begin position="17"/>
        <end position="25"/>
    </location>
    <ligand>
        <name>ATP</name>
        <dbReference type="ChEBI" id="CHEBI:30616"/>
    </ligand>
</feature>
<feature type="binding site" evidence="1">
    <location>
        <position position="41"/>
    </location>
    <ligand>
        <name>ATP</name>
        <dbReference type="ChEBI" id="CHEBI:30616"/>
    </ligand>
</feature>
<feature type="modified residue" description="Phosphoserine" evidence="6">
    <location>
        <position position="696"/>
    </location>
</feature>
<feature type="modified residue" description="Phosphoserine" evidence="7">
    <location>
        <position position="753"/>
    </location>
</feature>
<feature type="modified residue" description="Phosphoserine" evidence="7">
    <location>
        <position position="871"/>
    </location>
</feature>
<sequence length="898" mass="100476">MTSRKRSPHDFIFKEELGHGSYSTVFKALDKKSPNKIYAIKVCSKKHIIKEAKVKYVTIEKNTMNLLAQKHHAGIIKLYYTFHDEENLYFVLDFAPGGELLSLLHKMGTFNDIWTRHFTAQLIDALEFIHSHGIIHRDLKPENVLLDRDGRLMITDFGAAATIDPSLSGDSAKFNSDSNGSKDNQNCASFVGTAEYVSPELLLYNQCGYGSDIWALGCMIYQFVQGQPPFRGENELKTFEKIVALDYPWGPNNRINNSTSPINPLVINLVQKILVIEVNERISLEQIKRHPYFSKVDWNDKIKIWRGIWQSQGQSLQQTTLGLPNIPQNILPTRQLHVIDTPARSIQITKQKRKKPTKISNTTSSIVVWRKRLGISTGKDDLGTVPSTTPAVTAPNDTNVLTNTAAHSTANIALPPNSQSNQVKRAQLVAPNRIPPKVPVINDNVRNKSIPRTKPNVPPLQTSSIPQKLSTSSASSALSAPSTEIRNQDLTHTLDGRNSIDIHVLKQDYVFIYGIPYEHEGPAMSLNSYNKIDNDLITSLVAQHKEELKNSESFLQVLTLKKSGMLSYKNTVMEGNDDQENKEHQMANIEDTDLSMYDFEFNELTRKGFLILEKYKNRIWFISLPSYSTLSKIPFNAVKSSTINNNENWVDCFFRARQLLEEKQILDKISNVSFDSKASSEPSSPPPISRKERPLSIGNNVTTLSYTAKNGSQNNAPQNDNVGEEKPFRIPSSTKDRPGANSTPSSRHPRVLSSNNAGETPKKMNGRLPNSAPSTNTYTNGSVPAFNHRPSTNVGNNKHNILTSKKQGSSVFSPSSSTTKPQIKTTGYRQPTPSPPLPQMEFPTTREKYSAPSNMVISSSRYEVLHTLNNSQTNFDREIASRGASAAFRSLQKSKKKK</sequence>
<name>PKH3_YEAST</name>
<protein>
    <recommendedName>
        <fullName>Serine/threonine-protein kinase PKH3</fullName>
        <ecNumber>2.7.11.1</ecNumber>
    </recommendedName>
    <alternativeName>
        <fullName>Pkb-activating kinase homolog 3</fullName>
    </alternativeName>
</protein>
<keyword id="KW-0067">ATP-binding</keyword>
<keyword id="KW-0418">Kinase</keyword>
<keyword id="KW-0547">Nucleotide-binding</keyword>
<keyword id="KW-0597">Phosphoprotein</keyword>
<keyword id="KW-1185">Reference proteome</keyword>
<keyword id="KW-0723">Serine/threonine-protein kinase</keyword>
<keyword id="KW-0808">Transferase</keyword>
<evidence type="ECO:0000255" key="1">
    <source>
        <dbReference type="PROSITE-ProRule" id="PRU00159"/>
    </source>
</evidence>
<evidence type="ECO:0000255" key="2">
    <source>
        <dbReference type="PROSITE-ProRule" id="PRU10027"/>
    </source>
</evidence>
<evidence type="ECO:0000256" key="3">
    <source>
        <dbReference type="SAM" id="MobiDB-lite"/>
    </source>
</evidence>
<evidence type="ECO:0000269" key="4">
    <source>
    </source>
</evidence>
<evidence type="ECO:0000269" key="5">
    <source>
    </source>
</evidence>
<evidence type="ECO:0007744" key="6">
    <source>
    </source>
</evidence>
<evidence type="ECO:0007744" key="7">
    <source>
    </source>
</evidence>
<organism>
    <name type="scientific">Saccharomyces cerevisiae (strain ATCC 204508 / S288c)</name>
    <name type="common">Baker's yeast</name>
    <dbReference type="NCBI Taxonomy" id="559292"/>
    <lineage>
        <taxon>Eukaryota</taxon>
        <taxon>Fungi</taxon>
        <taxon>Dikarya</taxon>
        <taxon>Ascomycota</taxon>
        <taxon>Saccharomycotina</taxon>
        <taxon>Saccharomycetes</taxon>
        <taxon>Saccharomycetales</taxon>
        <taxon>Saccharomycetaceae</taxon>
        <taxon>Saccharomyces</taxon>
    </lineage>
</organism>
<dbReference type="EC" id="2.7.11.1"/>
<dbReference type="EMBL" id="U33050">
    <property type="protein sequence ID" value="AAB64902.1"/>
    <property type="molecule type" value="Genomic_DNA"/>
</dbReference>
<dbReference type="EMBL" id="BK006938">
    <property type="protein sequence ID" value="DAA12301.1"/>
    <property type="molecule type" value="Genomic_DNA"/>
</dbReference>
<dbReference type="PIR" id="S69634">
    <property type="entry name" value="S69634"/>
</dbReference>
<dbReference type="RefSeq" id="NP_010754.1">
    <property type="nucleotide sequence ID" value="NM_001180774.1"/>
</dbReference>
<dbReference type="SMR" id="Q03306"/>
<dbReference type="BioGRID" id="32520">
    <property type="interactions" value="136"/>
</dbReference>
<dbReference type="DIP" id="DIP-8781N"/>
<dbReference type="FunCoup" id="Q03306">
    <property type="interactions" value="449"/>
</dbReference>
<dbReference type="IntAct" id="Q03306">
    <property type="interactions" value="18"/>
</dbReference>
<dbReference type="MINT" id="Q03306"/>
<dbReference type="STRING" id="4932.YDR466W"/>
<dbReference type="GlyGen" id="Q03306">
    <property type="glycosylation" value="3 sites, 1 O-linked glycan (1 site)"/>
</dbReference>
<dbReference type="iPTMnet" id="Q03306"/>
<dbReference type="PaxDb" id="4932-YDR466W"/>
<dbReference type="PeptideAtlas" id="Q03306"/>
<dbReference type="EnsemblFungi" id="YDR466W_mRNA">
    <property type="protein sequence ID" value="YDR466W"/>
    <property type="gene ID" value="YDR466W"/>
</dbReference>
<dbReference type="GeneID" id="852077"/>
<dbReference type="KEGG" id="sce:YDR466W"/>
<dbReference type="AGR" id="SGD:S000002874"/>
<dbReference type="SGD" id="S000002874">
    <property type="gene designation" value="PKH3"/>
</dbReference>
<dbReference type="VEuPathDB" id="FungiDB:YDR466W"/>
<dbReference type="eggNOG" id="KOG0592">
    <property type="taxonomic scope" value="Eukaryota"/>
</dbReference>
<dbReference type="HOGENOM" id="CLU_008400_0_0_1"/>
<dbReference type="InParanoid" id="Q03306"/>
<dbReference type="OMA" id="CSKRHII"/>
<dbReference type="OrthoDB" id="347657at2759"/>
<dbReference type="BioCyc" id="YEAST:G3O-29994-MONOMER"/>
<dbReference type="BioGRID-ORCS" id="852077">
    <property type="hits" value="1 hit in 13 CRISPR screens"/>
</dbReference>
<dbReference type="PRO" id="PR:Q03306"/>
<dbReference type="Proteomes" id="UP000002311">
    <property type="component" value="Chromosome IV"/>
</dbReference>
<dbReference type="RNAct" id="Q03306">
    <property type="molecule type" value="protein"/>
</dbReference>
<dbReference type="GO" id="GO:0005524">
    <property type="term" value="F:ATP binding"/>
    <property type="evidence" value="ECO:0007669"/>
    <property type="project" value="UniProtKB-KW"/>
</dbReference>
<dbReference type="GO" id="GO:0004672">
    <property type="term" value="F:protein kinase activity"/>
    <property type="evidence" value="ECO:0007005"/>
    <property type="project" value="SGD"/>
</dbReference>
<dbReference type="GO" id="GO:0106310">
    <property type="term" value="F:protein serine kinase activity"/>
    <property type="evidence" value="ECO:0007669"/>
    <property type="project" value="RHEA"/>
</dbReference>
<dbReference type="GO" id="GO:0004674">
    <property type="term" value="F:protein serine/threonine kinase activity"/>
    <property type="evidence" value="ECO:0000318"/>
    <property type="project" value="GO_Central"/>
</dbReference>
<dbReference type="GO" id="GO:0000196">
    <property type="term" value="P:cell integrity MAPK cascade"/>
    <property type="evidence" value="ECO:0000316"/>
    <property type="project" value="SGD"/>
</dbReference>
<dbReference type="GO" id="GO:0035556">
    <property type="term" value="P:intracellular signal transduction"/>
    <property type="evidence" value="ECO:0000318"/>
    <property type="project" value="GO_Central"/>
</dbReference>
<dbReference type="CDD" id="cd05581">
    <property type="entry name" value="STKc_PDK1"/>
    <property type="match status" value="1"/>
</dbReference>
<dbReference type="FunFam" id="1.10.510.10:FF:000534">
    <property type="entry name" value="Serine/threonine-protein kinase PKH2"/>
    <property type="match status" value="1"/>
</dbReference>
<dbReference type="Gene3D" id="3.30.200.20">
    <property type="entry name" value="Phosphorylase Kinase, domain 1"/>
    <property type="match status" value="1"/>
</dbReference>
<dbReference type="Gene3D" id="1.10.510.10">
    <property type="entry name" value="Transferase(Phosphotransferase) domain 1"/>
    <property type="match status" value="1"/>
</dbReference>
<dbReference type="InterPro" id="IPR011009">
    <property type="entry name" value="Kinase-like_dom_sf"/>
</dbReference>
<dbReference type="InterPro" id="IPR039046">
    <property type="entry name" value="PDPK1"/>
</dbReference>
<dbReference type="InterPro" id="IPR000719">
    <property type="entry name" value="Prot_kinase_dom"/>
</dbReference>
<dbReference type="InterPro" id="IPR017441">
    <property type="entry name" value="Protein_kinase_ATP_BS"/>
</dbReference>
<dbReference type="InterPro" id="IPR008271">
    <property type="entry name" value="Ser/Thr_kinase_AS"/>
</dbReference>
<dbReference type="InterPro" id="IPR050236">
    <property type="entry name" value="Ser_Thr_kinase_AGC"/>
</dbReference>
<dbReference type="PANTHER" id="PTHR24356">
    <property type="entry name" value="SERINE/THREONINE-PROTEIN KINASE"/>
    <property type="match status" value="1"/>
</dbReference>
<dbReference type="PANTHER" id="PTHR24356:SF405">
    <property type="entry name" value="SERINE_THREONINE-PROTEIN KINASE PKH3"/>
    <property type="match status" value="1"/>
</dbReference>
<dbReference type="Pfam" id="PF25347">
    <property type="entry name" value="PH_PKH3_C"/>
    <property type="match status" value="1"/>
</dbReference>
<dbReference type="Pfam" id="PF00069">
    <property type="entry name" value="Pkinase"/>
    <property type="match status" value="1"/>
</dbReference>
<dbReference type="SMART" id="SM00220">
    <property type="entry name" value="S_TKc"/>
    <property type="match status" value="1"/>
</dbReference>
<dbReference type="SUPFAM" id="SSF56112">
    <property type="entry name" value="Protein kinase-like (PK-like)"/>
    <property type="match status" value="1"/>
</dbReference>
<dbReference type="PROSITE" id="PS00107">
    <property type="entry name" value="PROTEIN_KINASE_ATP"/>
    <property type="match status" value="1"/>
</dbReference>
<dbReference type="PROSITE" id="PS50011">
    <property type="entry name" value="PROTEIN_KINASE_DOM"/>
    <property type="match status" value="1"/>
</dbReference>
<dbReference type="PROSITE" id="PS00108">
    <property type="entry name" value="PROTEIN_KINASE_ST"/>
    <property type="match status" value="1"/>
</dbReference>
<reference key="1">
    <citation type="journal article" date="1997" name="Nature">
        <title>The nucleotide sequence of Saccharomyces cerevisiae chromosome IV.</title>
        <authorList>
            <person name="Jacq C."/>
            <person name="Alt-Moerbe J."/>
            <person name="Andre B."/>
            <person name="Arnold W."/>
            <person name="Bahr A."/>
            <person name="Ballesta J.P.G."/>
            <person name="Bargues M."/>
            <person name="Baron L."/>
            <person name="Becker A."/>
            <person name="Biteau N."/>
            <person name="Bloecker H."/>
            <person name="Blugeon C."/>
            <person name="Boskovic J."/>
            <person name="Brandt P."/>
            <person name="Brueckner M."/>
            <person name="Buitrago M.J."/>
            <person name="Coster F."/>
            <person name="Delaveau T."/>
            <person name="del Rey F."/>
            <person name="Dujon B."/>
            <person name="Eide L.G."/>
            <person name="Garcia-Cantalejo J.M."/>
            <person name="Goffeau A."/>
            <person name="Gomez-Peris A."/>
            <person name="Granotier C."/>
            <person name="Hanemann V."/>
            <person name="Hankeln T."/>
            <person name="Hoheisel J.D."/>
            <person name="Jaeger W."/>
            <person name="Jimenez A."/>
            <person name="Jonniaux J.-L."/>
            <person name="Kraemer C."/>
            <person name="Kuester H."/>
            <person name="Laamanen P."/>
            <person name="Legros Y."/>
            <person name="Louis E.J."/>
            <person name="Moeller-Rieker S."/>
            <person name="Monnet A."/>
            <person name="Moro M."/>
            <person name="Mueller-Auer S."/>
            <person name="Nussbaumer B."/>
            <person name="Paricio N."/>
            <person name="Paulin L."/>
            <person name="Perea J."/>
            <person name="Perez-Alonso M."/>
            <person name="Perez-Ortin J.E."/>
            <person name="Pohl T.M."/>
            <person name="Prydz H."/>
            <person name="Purnelle B."/>
            <person name="Rasmussen S.W."/>
            <person name="Remacha M.A."/>
            <person name="Revuelta J.L."/>
            <person name="Rieger M."/>
            <person name="Salom D."/>
            <person name="Saluz H.P."/>
            <person name="Saiz J.E."/>
            <person name="Saren A.-M."/>
            <person name="Schaefer M."/>
            <person name="Scharfe M."/>
            <person name="Schmidt E.R."/>
            <person name="Schneider C."/>
            <person name="Scholler P."/>
            <person name="Schwarz S."/>
            <person name="Soler-Mira A."/>
            <person name="Urrestarazu L.A."/>
            <person name="Verhasselt P."/>
            <person name="Vissers S."/>
            <person name="Voet M."/>
            <person name="Volckaert G."/>
            <person name="Wagner G."/>
            <person name="Wambutt R."/>
            <person name="Wedler E."/>
            <person name="Wedler H."/>
            <person name="Woelfl S."/>
            <person name="Harris D.E."/>
            <person name="Bowman S."/>
            <person name="Brown D."/>
            <person name="Churcher C.M."/>
            <person name="Connor R."/>
            <person name="Dedman K."/>
            <person name="Gentles S."/>
            <person name="Hamlin N."/>
            <person name="Hunt S."/>
            <person name="Jones L."/>
            <person name="McDonald S."/>
            <person name="Murphy L.D."/>
            <person name="Niblett D."/>
            <person name="Odell C."/>
            <person name="Oliver K."/>
            <person name="Rajandream M.A."/>
            <person name="Richards C."/>
            <person name="Shore L."/>
            <person name="Walsh S.V."/>
            <person name="Barrell B.G."/>
            <person name="Dietrich F.S."/>
            <person name="Mulligan J.T."/>
            <person name="Allen E."/>
            <person name="Araujo R."/>
            <person name="Aviles E."/>
            <person name="Berno A."/>
            <person name="Carpenter J."/>
            <person name="Chen E."/>
            <person name="Cherry J.M."/>
            <person name="Chung E."/>
            <person name="Duncan M."/>
            <person name="Hunicke-Smith S."/>
            <person name="Hyman R.W."/>
            <person name="Komp C."/>
            <person name="Lashkari D."/>
            <person name="Lew H."/>
            <person name="Lin D."/>
            <person name="Mosedale D."/>
            <person name="Nakahara K."/>
            <person name="Namath A."/>
            <person name="Oefner P."/>
            <person name="Oh C."/>
            <person name="Petel F.X."/>
            <person name="Roberts D."/>
            <person name="Schramm S."/>
            <person name="Schroeder M."/>
            <person name="Shogren T."/>
            <person name="Shroff N."/>
            <person name="Winant A."/>
            <person name="Yelton M.A."/>
            <person name="Botstein D."/>
            <person name="Davis R.W."/>
            <person name="Johnston M."/>
            <person name="Andrews S."/>
            <person name="Brinkman R."/>
            <person name="Cooper J."/>
            <person name="Ding H."/>
            <person name="Du Z."/>
            <person name="Favello A."/>
            <person name="Fulton L."/>
            <person name="Gattung S."/>
            <person name="Greco T."/>
            <person name="Hallsworth K."/>
            <person name="Hawkins J."/>
            <person name="Hillier L.W."/>
            <person name="Jier M."/>
            <person name="Johnson D."/>
            <person name="Johnston L."/>
            <person name="Kirsten J."/>
            <person name="Kucaba T."/>
            <person name="Langston Y."/>
            <person name="Latreille P."/>
            <person name="Le T."/>
            <person name="Mardis E."/>
            <person name="Menezes S."/>
            <person name="Miller N."/>
            <person name="Nhan M."/>
            <person name="Pauley A."/>
            <person name="Peluso D."/>
            <person name="Rifkin L."/>
            <person name="Riles L."/>
            <person name="Taich A."/>
            <person name="Trevaskis E."/>
            <person name="Vignati D."/>
            <person name="Wilcox L."/>
            <person name="Wohldman P."/>
            <person name="Vaudin M."/>
            <person name="Wilson R."/>
            <person name="Waterston R."/>
            <person name="Albermann K."/>
            <person name="Hani J."/>
            <person name="Heumann K."/>
            <person name="Kleine K."/>
            <person name="Mewes H.-W."/>
            <person name="Zollner A."/>
            <person name="Zaccaria P."/>
        </authorList>
    </citation>
    <scope>NUCLEOTIDE SEQUENCE [LARGE SCALE GENOMIC DNA]</scope>
    <source>
        <strain>ATCC 204508 / S288c</strain>
    </source>
</reference>
<reference key="2">
    <citation type="journal article" date="2014" name="G3 (Bethesda)">
        <title>The reference genome sequence of Saccharomyces cerevisiae: Then and now.</title>
        <authorList>
            <person name="Engel S.R."/>
            <person name="Dietrich F.S."/>
            <person name="Fisk D.G."/>
            <person name="Binkley G."/>
            <person name="Balakrishnan R."/>
            <person name="Costanzo M.C."/>
            <person name="Dwight S.S."/>
            <person name="Hitz B.C."/>
            <person name="Karra K."/>
            <person name="Nash R.S."/>
            <person name="Weng S."/>
            <person name="Wong E.D."/>
            <person name="Lloyd P."/>
            <person name="Skrzypek M.S."/>
            <person name="Miyasato S.R."/>
            <person name="Simison M."/>
            <person name="Cherry J.M."/>
        </authorList>
    </citation>
    <scope>GENOME REANNOTATION</scope>
    <source>
        <strain>ATCC 204508 / S288c</strain>
    </source>
</reference>
<reference key="3">
    <citation type="journal article" date="1999" name="Mol. Cell. Biol.">
        <title>PDK1 homologs activate the Pkc1-mitogen-activated protein kinase pathway in yeast.</title>
        <authorList>
            <person name="Inagaki M."/>
            <person name="Schmelzle T."/>
            <person name="Yamaguchi K."/>
            <person name="Irie K."/>
            <person name="Hall M.N."/>
            <person name="Matsumoto K."/>
        </authorList>
    </citation>
    <scope>FUNCTION</scope>
</reference>
<reference key="4">
    <citation type="journal article" date="2000" name="Nat. Genet.">
        <title>Analysis of yeast protein kinases using protein chips.</title>
        <authorList>
            <person name="Zhu H."/>
            <person name="Klemic J.F."/>
            <person name="Chang S."/>
            <person name="Bertone P."/>
            <person name="Casamayor A."/>
            <person name="Klemic K.G."/>
            <person name="Smith D."/>
            <person name="Gerstein M."/>
            <person name="Reed M.A."/>
            <person name="Snyder M."/>
        </authorList>
    </citation>
    <scope>FUNCTION</scope>
</reference>
<reference key="5">
    <citation type="journal article" date="2008" name="Mol. Cell. Proteomics">
        <title>A multidimensional chromatography technology for in-depth phosphoproteome analysis.</title>
        <authorList>
            <person name="Albuquerque C.P."/>
            <person name="Smolka M.B."/>
            <person name="Payne S.H."/>
            <person name="Bafna V."/>
            <person name="Eng J."/>
            <person name="Zhou H."/>
        </authorList>
    </citation>
    <scope>PHOSPHORYLATION [LARGE SCALE ANALYSIS] AT SER-696</scope>
    <scope>IDENTIFICATION BY MASS SPECTROMETRY [LARGE SCALE ANALYSIS]</scope>
</reference>
<reference key="6">
    <citation type="journal article" date="2009" name="Science">
        <title>Global analysis of Cdk1 substrate phosphorylation sites provides insights into evolution.</title>
        <authorList>
            <person name="Holt L.J."/>
            <person name="Tuch B.B."/>
            <person name="Villen J."/>
            <person name="Johnson A.D."/>
            <person name="Gygi S.P."/>
            <person name="Morgan D.O."/>
        </authorList>
    </citation>
    <scope>PHOSPHORYLATION [LARGE SCALE ANALYSIS] AT SER-753 AND SER-871</scope>
    <scope>IDENTIFICATION BY MASS SPECTROMETRY [LARGE SCALE ANALYSIS]</scope>
</reference>
<comment type="function">
    <text evidence="4 5">Serine/threonine-protein kinase which may phosphorylate the same targets substrates as PKH1 and PKH2, 2 upstream activators of PKC1.</text>
</comment>
<comment type="catalytic activity">
    <reaction>
        <text>L-seryl-[protein] + ATP = O-phospho-L-seryl-[protein] + ADP + H(+)</text>
        <dbReference type="Rhea" id="RHEA:17989"/>
        <dbReference type="Rhea" id="RHEA-COMP:9863"/>
        <dbReference type="Rhea" id="RHEA-COMP:11604"/>
        <dbReference type="ChEBI" id="CHEBI:15378"/>
        <dbReference type="ChEBI" id="CHEBI:29999"/>
        <dbReference type="ChEBI" id="CHEBI:30616"/>
        <dbReference type="ChEBI" id="CHEBI:83421"/>
        <dbReference type="ChEBI" id="CHEBI:456216"/>
        <dbReference type="EC" id="2.7.11.1"/>
    </reaction>
</comment>
<comment type="catalytic activity">
    <reaction>
        <text>L-threonyl-[protein] + ATP = O-phospho-L-threonyl-[protein] + ADP + H(+)</text>
        <dbReference type="Rhea" id="RHEA:46608"/>
        <dbReference type="Rhea" id="RHEA-COMP:11060"/>
        <dbReference type="Rhea" id="RHEA-COMP:11605"/>
        <dbReference type="ChEBI" id="CHEBI:15378"/>
        <dbReference type="ChEBI" id="CHEBI:30013"/>
        <dbReference type="ChEBI" id="CHEBI:30616"/>
        <dbReference type="ChEBI" id="CHEBI:61977"/>
        <dbReference type="ChEBI" id="CHEBI:456216"/>
        <dbReference type="EC" id="2.7.11.1"/>
    </reaction>
</comment>
<comment type="interaction">
    <interactant intactId="EBI-37683">
        <id>Q03306</id>
    </interactant>
    <interactant intactId="EBI-11687">
        <id>Q04439</id>
        <label>MYO5</label>
    </interactant>
    <organismsDiffer>false</organismsDiffer>
    <experiments>2</experiments>
</comment>
<comment type="interaction">
    <interactant intactId="EBI-37683">
        <id>Q03306</id>
    </interactant>
    <interactant intactId="EBI-12870">
        <id>P37304</id>
        <label>PAM1</label>
    </interactant>
    <organismsDiffer>false</organismsDiffer>
    <experiments>3</experiments>
</comment>
<comment type="similarity">
    <text evidence="1">Belongs to the protein kinase superfamily. Ser/Thr protein kinase family.</text>
</comment>
<gene>
    <name type="primary">PKH3</name>
    <name type="ordered locus">YDR466W</name>
</gene>
<proteinExistence type="evidence at protein level"/>